<feature type="chain" id="PRO_1000205183" description="Chaperone protein DnaK">
    <location>
        <begin position="1"/>
        <end position="638"/>
    </location>
</feature>
<feature type="region of interest" description="Disordered" evidence="2">
    <location>
        <begin position="596"/>
        <end position="638"/>
    </location>
</feature>
<feature type="compositionally biased region" description="Low complexity" evidence="2">
    <location>
        <begin position="598"/>
        <end position="620"/>
    </location>
</feature>
<feature type="compositionally biased region" description="Acidic residues" evidence="2">
    <location>
        <begin position="621"/>
        <end position="630"/>
    </location>
</feature>
<feature type="modified residue" description="Phosphothreonine; by autocatalysis" evidence="1">
    <location>
        <position position="197"/>
    </location>
</feature>
<dbReference type="EMBL" id="CP001649">
    <property type="protein sequence ID" value="ACS79628.1"/>
    <property type="molecule type" value="Genomic_DNA"/>
</dbReference>
<dbReference type="RefSeq" id="WP_015851446.1">
    <property type="nucleotide sequence ID" value="NC_012881.1"/>
</dbReference>
<dbReference type="SMR" id="C6BSF2"/>
<dbReference type="STRING" id="526222.Desal_1566"/>
<dbReference type="KEGG" id="dsa:Desal_1566"/>
<dbReference type="eggNOG" id="COG0443">
    <property type="taxonomic scope" value="Bacteria"/>
</dbReference>
<dbReference type="HOGENOM" id="CLU_005965_2_1_7"/>
<dbReference type="OrthoDB" id="9766019at2"/>
<dbReference type="Proteomes" id="UP000002601">
    <property type="component" value="Chromosome"/>
</dbReference>
<dbReference type="GO" id="GO:0005524">
    <property type="term" value="F:ATP binding"/>
    <property type="evidence" value="ECO:0007669"/>
    <property type="project" value="UniProtKB-UniRule"/>
</dbReference>
<dbReference type="GO" id="GO:0140662">
    <property type="term" value="F:ATP-dependent protein folding chaperone"/>
    <property type="evidence" value="ECO:0007669"/>
    <property type="project" value="InterPro"/>
</dbReference>
<dbReference type="GO" id="GO:0051082">
    <property type="term" value="F:unfolded protein binding"/>
    <property type="evidence" value="ECO:0007669"/>
    <property type="project" value="InterPro"/>
</dbReference>
<dbReference type="CDD" id="cd10234">
    <property type="entry name" value="ASKHA_NBD_HSP70_DnaK-like"/>
    <property type="match status" value="1"/>
</dbReference>
<dbReference type="FunFam" id="2.60.34.10:FF:000014">
    <property type="entry name" value="Chaperone protein DnaK HSP70"/>
    <property type="match status" value="1"/>
</dbReference>
<dbReference type="FunFam" id="1.20.1270.10:FF:000001">
    <property type="entry name" value="Molecular chaperone DnaK"/>
    <property type="match status" value="1"/>
</dbReference>
<dbReference type="FunFam" id="3.30.420.40:FF:000004">
    <property type="entry name" value="Molecular chaperone DnaK"/>
    <property type="match status" value="1"/>
</dbReference>
<dbReference type="FunFam" id="3.90.640.10:FF:000003">
    <property type="entry name" value="Molecular chaperone DnaK"/>
    <property type="match status" value="1"/>
</dbReference>
<dbReference type="Gene3D" id="1.20.1270.10">
    <property type="match status" value="1"/>
</dbReference>
<dbReference type="Gene3D" id="3.30.420.40">
    <property type="match status" value="2"/>
</dbReference>
<dbReference type="Gene3D" id="3.90.640.10">
    <property type="entry name" value="Actin, Chain A, domain 4"/>
    <property type="match status" value="1"/>
</dbReference>
<dbReference type="Gene3D" id="2.60.34.10">
    <property type="entry name" value="Substrate Binding Domain Of DNAk, Chain A, domain 1"/>
    <property type="match status" value="1"/>
</dbReference>
<dbReference type="HAMAP" id="MF_00332">
    <property type="entry name" value="DnaK"/>
    <property type="match status" value="1"/>
</dbReference>
<dbReference type="InterPro" id="IPR043129">
    <property type="entry name" value="ATPase_NBD"/>
</dbReference>
<dbReference type="InterPro" id="IPR012725">
    <property type="entry name" value="Chaperone_DnaK"/>
</dbReference>
<dbReference type="InterPro" id="IPR018181">
    <property type="entry name" value="Heat_shock_70_CS"/>
</dbReference>
<dbReference type="InterPro" id="IPR029048">
    <property type="entry name" value="HSP70_C_sf"/>
</dbReference>
<dbReference type="InterPro" id="IPR029047">
    <property type="entry name" value="HSP70_peptide-bd_sf"/>
</dbReference>
<dbReference type="InterPro" id="IPR013126">
    <property type="entry name" value="Hsp_70_fam"/>
</dbReference>
<dbReference type="NCBIfam" id="NF001413">
    <property type="entry name" value="PRK00290.1"/>
    <property type="match status" value="1"/>
</dbReference>
<dbReference type="NCBIfam" id="NF003520">
    <property type="entry name" value="PRK05183.1"/>
    <property type="match status" value="1"/>
</dbReference>
<dbReference type="NCBIfam" id="TIGR02350">
    <property type="entry name" value="prok_dnaK"/>
    <property type="match status" value="1"/>
</dbReference>
<dbReference type="PANTHER" id="PTHR19375">
    <property type="entry name" value="HEAT SHOCK PROTEIN 70KDA"/>
    <property type="match status" value="1"/>
</dbReference>
<dbReference type="Pfam" id="PF00012">
    <property type="entry name" value="HSP70"/>
    <property type="match status" value="1"/>
</dbReference>
<dbReference type="PRINTS" id="PR00301">
    <property type="entry name" value="HEATSHOCK70"/>
</dbReference>
<dbReference type="SUPFAM" id="SSF53067">
    <property type="entry name" value="Actin-like ATPase domain"/>
    <property type="match status" value="2"/>
</dbReference>
<dbReference type="SUPFAM" id="SSF100934">
    <property type="entry name" value="Heat shock protein 70kD (HSP70), C-terminal subdomain"/>
    <property type="match status" value="1"/>
</dbReference>
<dbReference type="SUPFAM" id="SSF100920">
    <property type="entry name" value="Heat shock protein 70kD (HSP70), peptide-binding domain"/>
    <property type="match status" value="1"/>
</dbReference>
<dbReference type="PROSITE" id="PS00297">
    <property type="entry name" value="HSP70_1"/>
    <property type="match status" value="1"/>
</dbReference>
<dbReference type="PROSITE" id="PS00329">
    <property type="entry name" value="HSP70_2"/>
    <property type="match status" value="1"/>
</dbReference>
<dbReference type="PROSITE" id="PS01036">
    <property type="entry name" value="HSP70_3"/>
    <property type="match status" value="1"/>
</dbReference>
<sequence length="638" mass="68729">MSKIIGIDLGTTNSCVYVMEGKDPKCVTNAEGGRTTPSIVGFTDKERLVGEIAKRQAVTNPEKTVFAIKRLMGRQASSPEVKKWADHCPYPIVDGKGGDAWVEIEGKKYSPSEVSAIILQQLKKDAETYLGETVSEAVITVPAYFNDSQRQATKDAGRIAGLEVKRIINEPTAASLAYGFDKKANEKIAVFDLGGGTFDISILEVGDNVVEVRATNGDTFLGGEDFDNAVIQYLVEEFKRENGIDLSADRMALQRLKEAGEKAKKELSTAMETEVNLPFITADQNGPKHLMVKISRAKLEKLVEDLVERTKVPCQKALKDAGLTAADIDEVILVGGMTRMPLVQQKVQEFFGKEPNRSVNPDEVVAMGASIQGGILAGDVKDVLLLDVTPLSLGIETMGGVFTNLIERNTTIPTRKSQVFTTAADNQPSVSIHVLQGERPMAADNMTLGRFELTGLPAAPRGVPQIEVTFDIDANGIVNVSAKDMGTGKEQSIQITASSGLSEEDIEKMVKDAESHAEDDKKKQALIEARNQADSLIYTTEKSLREVGENVDAALKSDIEAKIEDLKKVQDSDDPETIKQATDALAQASHKLAEQLYAQQNAGAEGAEGPEGAANAGAAGADDDVVDADFTEVKDEKK</sequence>
<protein>
    <recommendedName>
        <fullName evidence="1">Chaperone protein DnaK</fullName>
    </recommendedName>
    <alternativeName>
        <fullName evidence="1">HSP70</fullName>
    </alternativeName>
    <alternativeName>
        <fullName evidence="1">Heat shock 70 kDa protein</fullName>
    </alternativeName>
    <alternativeName>
        <fullName evidence="1">Heat shock protein 70</fullName>
    </alternativeName>
</protein>
<name>DNAK_MARSD</name>
<reference key="1">
    <citation type="submission" date="2009-06" db="EMBL/GenBank/DDBJ databases">
        <title>Complete sequence of Desulfovibrio salexigens DSM 2638.</title>
        <authorList>
            <consortium name="US DOE Joint Genome Institute"/>
            <person name="Lucas S."/>
            <person name="Copeland A."/>
            <person name="Lapidus A."/>
            <person name="Glavina del Rio T."/>
            <person name="Tice H."/>
            <person name="Bruce D."/>
            <person name="Goodwin L."/>
            <person name="Pitluck S."/>
            <person name="Munk A.C."/>
            <person name="Brettin T."/>
            <person name="Detter J.C."/>
            <person name="Han C."/>
            <person name="Tapia R."/>
            <person name="Larimer F."/>
            <person name="Land M."/>
            <person name="Hauser L."/>
            <person name="Kyrpides N."/>
            <person name="Anderson I."/>
            <person name="Wall J.D."/>
            <person name="Arkin A.P."/>
            <person name="Dehal P."/>
            <person name="Chivian D."/>
            <person name="Giles B."/>
            <person name="Hazen T.C."/>
        </authorList>
    </citation>
    <scope>NUCLEOTIDE SEQUENCE [LARGE SCALE GENOMIC DNA]</scope>
    <source>
        <strain>ATCC 14822 / DSM 2638 / NCIMB 8403 / VKM B-1763</strain>
    </source>
</reference>
<proteinExistence type="inferred from homology"/>
<gene>
    <name evidence="1" type="primary">dnaK</name>
    <name type="ordered locus">Desal_1566</name>
</gene>
<accession>C6BSF2</accession>
<organism>
    <name type="scientific">Maridesulfovibrio salexigens (strain ATCC 14822 / DSM 2638 / NCIMB 8403 / VKM B-1763)</name>
    <name type="common">Desulfovibrio salexigens</name>
    <dbReference type="NCBI Taxonomy" id="526222"/>
    <lineage>
        <taxon>Bacteria</taxon>
        <taxon>Pseudomonadati</taxon>
        <taxon>Thermodesulfobacteriota</taxon>
        <taxon>Desulfovibrionia</taxon>
        <taxon>Desulfovibrionales</taxon>
        <taxon>Desulfovibrionaceae</taxon>
        <taxon>Maridesulfovibrio</taxon>
    </lineage>
</organism>
<evidence type="ECO:0000255" key="1">
    <source>
        <dbReference type="HAMAP-Rule" id="MF_00332"/>
    </source>
</evidence>
<evidence type="ECO:0000256" key="2">
    <source>
        <dbReference type="SAM" id="MobiDB-lite"/>
    </source>
</evidence>
<keyword id="KW-0067">ATP-binding</keyword>
<keyword id="KW-0143">Chaperone</keyword>
<keyword id="KW-0547">Nucleotide-binding</keyword>
<keyword id="KW-0597">Phosphoprotein</keyword>
<keyword id="KW-1185">Reference proteome</keyword>
<keyword id="KW-0346">Stress response</keyword>
<comment type="function">
    <text evidence="1">Acts as a chaperone.</text>
</comment>
<comment type="induction">
    <text evidence="1">By stress conditions e.g. heat shock.</text>
</comment>
<comment type="similarity">
    <text evidence="1">Belongs to the heat shock protein 70 family.</text>
</comment>